<keyword id="KW-0270">Exopolysaccharide synthesis</keyword>
<keyword id="KW-0808">Transferase</keyword>
<protein>
    <recommendedName>
        <fullName>Capsular polysaccharide phosphotransferase WcwK</fullName>
        <ecNumber>2.7.-.-</ecNumber>
    </recommendedName>
    <alternativeName>
        <fullName>Stealth protein WcwK</fullName>
    </alternativeName>
</protein>
<reference key="1">
    <citation type="journal article" date="2006" name="PLoS Genet.">
        <title>Genetic analysis of the capsular biosynthetic locus from all 90 pneumococcal serotypes.</title>
        <authorList>
            <person name="Bentley S.D."/>
            <person name="Aanensen D.M."/>
            <person name="Mavroidi A."/>
            <person name="Saunders D."/>
            <person name="Rabbinowitsch E."/>
            <person name="Collins M."/>
            <person name="Donohoe K."/>
            <person name="Harris D."/>
            <person name="Murphy L."/>
            <person name="Quail M.A."/>
            <person name="Samuel G."/>
            <person name="Skovsted I.C."/>
            <person name="Kaltoft M.S."/>
            <person name="Barrell B."/>
            <person name="Reeves P.R."/>
            <person name="Parkhill J."/>
            <person name="Spratt B.G."/>
        </authorList>
    </citation>
    <scope>NUCLEOTIDE SEQUENCE [GENOMIC DNA]</scope>
    <source>
        <strain>34365 / Serotype 20</strain>
    </source>
</reference>
<reference key="2">
    <citation type="journal article" date="2005" name="PLoS Comput. Biol.">
        <title>Stealth proteins: in silico identification of a novel protein family rendering bacterial pathogens invisible to host immune defense.</title>
        <authorList>
            <person name="Sperisen P."/>
            <person name="Schmid C.D."/>
            <person name="Bucher P."/>
            <person name="Zilian O."/>
        </authorList>
    </citation>
    <scope>IDENTIFICATION AS A STEALTH PROTEIN</scope>
    <scope>PREDICTION OF FUNCTION</scope>
</reference>
<evidence type="ECO:0000305" key="1"/>
<sequence length="329" mass="39631">MVNNIDFVVTWVNGNDPVWREEKKKYEVLDGRPTLNDETRYRDMDLFQYWFRAVEKHAPWVNNIYFITYGHLPEWLDANHPKLKIVKHEDYIPKEYLPTFSSNVIELNLFRIKELSEQFVLFSDDVFINTFLKEEDLFKNNLPRLLSIYRPLIPTKEFDYINFNHLLIMNRYFHDKKTLSQHKGKFFNVGYGKFNLYNLFSIFYSGIIGYHDAHVAMPHLKSTFAEIWNKEGVLLDRVCKNKFRSTKDVNHWLMSYWNIETNSFMPQTLRVGEYVPLAYSGKIESIIHKQKNKFLCINDDEHTENFINEVNFVRKIFEKKFPEKSKFEK</sequence>
<name>WCWK3_STREE</name>
<comment type="miscellaneous">
    <text>Stealth proteins are part of a protein family that is conserved from bacteria to higher eukaryotes. Family members were first identified in microbes as proteins that help pathogens to elude the host innate immune system. Microbial stealth proteins are involved in the biosynthesis of exopolysaccharides. Stealth proteins are predicted to function as hexose-1-phosphoryltransferases.</text>
</comment>
<comment type="similarity">
    <text evidence="1">Belongs to the stealth family.</text>
</comment>
<dbReference type="EC" id="2.7.-.-"/>
<dbReference type="EMBL" id="CR931679">
    <property type="protein sequence ID" value="CAI33721.1"/>
    <property type="molecule type" value="Genomic_DNA"/>
</dbReference>
<dbReference type="RefSeq" id="WP_000247840.1">
    <property type="nucleotide sequence ID" value="NZ_UHGO01000005.1"/>
</dbReference>
<dbReference type="SMR" id="Q4K0S9"/>
<dbReference type="GO" id="GO:0016772">
    <property type="term" value="F:transferase activity, transferring phosphorus-containing groups"/>
    <property type="evidence" value="ECO:0007669"/>
    <property type="project" value="InterPro"/>
</dbReference>
<dbReference type="GO" id="GO:0000271">
    <property type="term" value="P:polysaccharide biosynthetic process"/>
    <property type="evidence" value="ECO:0007669"/>
    <property type="project" value="UniProtKB-KW"/>
</dbReference>
<dbReference type="InterPro" id="IPR047141">
    <property type="entry name" value="Stealth"/>
</dbReference>
<dbReference type="InterPro" id="IPR031358">
    <property type="entry name" value="Stealth_CR1"/>
</dbReference>
<dbReference type="InterPro" id="IPR021520">
    <property type="entry name" value="Stealth_CR2"/>
</dbReference>
<dbReference type="InterPro" id="IPR031357">
    <property type="entry name" value="Stealth_CR3"/>
</dbReference>
<dbReference type="PANTHER" id="PTHR24045">
    <property type="match status" value="1"/>
</dbReference>
<dbReference type="PANTHER" id="PTHR24045:SF0">
    <property type="entry name" value="N-ACETYLGLUCOSAMINE-1-PHOSPHOTRANSFERASE SUBUNITS ALPHA_BETA"/>
    <property type="match status" value="1"/>
</dbReference>
<dbReference type="Pfam" id="PF17101">
    <property type="entry name" value="Stealth_CR1"/>
    <property type="match status" value="1"/>
</dbReference>
<dbReference type="Pfam" id="PF11380">
    <property type="entry name" value="Stealth_CR2"/>
    <property type="match status" value="1"/>
</dbReference>
<dbReference type="Pfam" id="PF17102">
    <property type="entry name" value="Stealth_CR3"/>
    <property type="match status" value="1"/>
</dbReference>
<feature type="chain" id="PRO_0000235969" description="Capsular polysaccharide phosphotransferase WcwK">
    <location>
        <begin position="1"/>
        <end position="329"/>
    </location>
</feature>
<organism>
    <name type="scientific">Streptococcus pneumoniae</name>
    <dbReference type="NCBI Taxonomy" id="1313"/>
    <lineage>
        <taxon>Bacteria</taxon>
        <taxon>Bacillati</taxon>
        <taxon>Bacillota</taxon>
        <taxon>Bacilli</taxon>
        <taxon>Lactobacillales</taxon>
        <taxon>Streptococcaceae</taxon>
        <taxon>Streptococcus</taxon>
    </lineage>
</organism>
<accession>Q4K0S9</accession>
<gene>
    <name type="primary">wcwK</name>
    <name type="ORF">SPC20_0013</name>
</gene>
<proteinExistence type="inferred from homology"/>